<gene>
    <name evidence="1" type="primary">mnmA</name>
    <name type="synonym">trmU</name>
    <name type="ordered locus">LIC_12269</name>
</gene>
<feature type="chain" id="PRO_0000121645" description="tRNA-specific 2-thiouridylase MnmA">
    <location>
        <begin position="1"/>
        <end position="375"/>
    </location>
</feature>
<feature type="region of interest" description="Interaction with tRNA" evidence="1">
    <location>
        <begin position="151"/>
        <end position="153"/>
    </location>
</feature>
<feature type="region of interest" description="Interaction with tRNA" evidence="1">
    <location>
        <begin position="307"/>
        <end position="308"/>
    </location>
</feature>
<feature type="active site" description="Nucleophile" evidence="1">
    <location>
        <position position="105"/>
    </location>
</feature>
<feature type="active site" description="Cysteine persulfide intermediate" evidence="1">
    <location>
        <position position="201"/>
    </location>
</feature>
<feature type="binding site" evidence="1">
    <location>
        <begin position="9"/>
        <end position="16"/>
    </location>
    <ligand>
        <name>ATP</name>
        <dbReference type="ChEBI" id="CHEBI:30616"/>
    </ligand>
</feature>
<feature type="binding site" evidence="1">
    <location>
        <position position="35"/>
    </location>
    <ligand>
        <name>ATP</name>
        <dbReference type="ChEBI" id="CHEBI:30616"/>
    </ligand>
</feature>
<feature type="binding site" evidence="1">
    <location>
        <position position="129"/>
    </location>
    <ligand>
        <name>ATP</name>
        <dbReference type="ChEBI" id="CHEBI:30616"/>
    </ligand>
</feature>
<feature type="site" description="Interaction with tRNA" evidence="1">
    <location>
        <position position="130"/>
    </location>
</feature>
<feature type="site" description="Interaction with tRNA" evidence="1">
    <location>
        <position position="339"/>
    </location>
</feature>
<feature type="disulfide bond" description="Alternate" evidence="1">
    <location>
        <begin position="105"/>
        <end position="201"/>
    </location>
</feature>
<proteinExistence type="inferred from homology"/>
<comment type="function">
    <text evidence="1">Catalyzes the 2-thiolation of uridine at the wobble position (U34) of tRNA, leading to the formation of s(2)U34.</text>
</comment>
<comment type="catalytic activity">
    <reaction evidence="1">
        <text>S-sulfanyl-L-cysteinyl-[protein] + uridine(34) in tRNA + AH2 + ATP = 2-thiouridine(34) in tRNA + L-cysteinyl-[protein] + A + AMP + diphosphate + H(+)</text>
        <dbReference type="Rhea" id="RHEA:47032"/>
        <dbReference type="Rhea" id="RHEA-COMP:10131"/>
        <dbReference type="Rhea" id="RHEA-COMP:11726"/>
        <dbReference type="Rhea" id="RHEA-COMP:11727"/>
        <dbReference type="Rhea" id="RHEA-COMP:11728"/>
        <dbReference type="ChEBI" id="CHEBI:13193"/>
        <dbReference type="ChEBI" id="CHEBI:15378"/>
        <dbReference type="ChEBI" id="CHEBI:17499"/>
        <dbReference type="ChEBI" id="CHEBI:29950"/>
        <dbReference type="ChEBI" id="CHEBI:30616"/>
        <dbReference type="ChEBI" id="CHEBI:33019"/>
        <dbReference type="ChEBI" id="CHEBI:61963"/>
        <dbReference type="ChEBI" id="CHEBI:65315"/>
        <dbReference type="ChEBI" id="CHEBI:87170"/>
        <dbReference type="ChEBI" id="CHEBI:456215"/>
        <dbReference type="EC" id="2.8.1.13"/>
    </reaction>
</comment>
<comment type="subcellular location">
    <subcellularLocation>
        <location evidence="1">Cytoplasm</location>
    </subcellularLocation>
</comment>
<comment type="similarity">
    <text evidence="1">Belongs to the MnmA/TRMU family.</text>
</comment>
<comment type="sequence caution" evidence="2">
    <conflict type="erroneous initiation">
        <sequence resource="EMBL-CDS" id="AAS70841"/>
    </conflict>
</comment>
<keyword id="KW-0067">ATP-binding</keyword>
<keyword id="KW-0963">Cytoplasm</keyword>
<keyword id="KW-1015">Disulfide bond</keyword>
<keyword id="KW-0547">Nucleotide-binding</keyword>
<keyword id="KW-0694">RNA-binding</keyword>
<keyword id="KW-0808">Transferase</keyword>
<keyword id="KW-0819">tRNA processing</keyword>
<keyword id="KW-0820">tRNA-binding</keyword>
<sequence>MSKGKIIVAMSGGVDSAVTAGLLMEDGYEVIGVNLRTWEYEAPACDTTKKSCCSPEDIRDARDVGISLKIPFYVIKMEKVFQEKVIDRFIEDYQHGKTPNPCVECNTFVKFGALFEKAKALGIDKIATGHYARIARNGERYAIANGIDVGKNQAYYLYGLSQENLKNVIFPLGEMTKPEVRQIARRMGLPVADKSESQEICFIPENDYRKFLEKKNVEFTPGFFKLKDGRIVGKHKGRENFTIGQRKGLGIAWKNPLYVISIEDDGSVILGEENETYNESFSVIDLNFQGLAPLNEGESLECRVQVRYRHIPIRCKITKMKEGLIVHPLEDVRGVTPGQSAVFYPLDSDYLLLGGIISKGSIQMRVAEPAISVLN</sequence>
<organism>
    <name type="scientific">Leptospira interrogans serogroup Icterohaemorrhagiae serovar copenhageni (strain Fiocruz L1-130)</name>
    <dbReference type="NCBI Taxonomy" id="267671"/>
    <lineage>
        <taxon>Bacteria</taxon>
        <taxon>Pseudomonadati</taxon>
        <taxon>Spirochaetota</taxon>
        <taxon>Spirochaetia</taxon>
        <taxon>Leptospirales</taxon>
        <taxon>Leptospiraceae</taxon>
        <taxon>Leptospira</taxon>
    </lineage>
</organism>
<evidence type="ECO:0000255" key="1">
    <source>
        <dbReference type="HAMAP-Rule" id="MF_00144"/>
    </source>
</evidence>
<evidence type="ECO:0000305" key="2"/>
<accession>Q72Q44</accession>
<name>MNMA_LEPIC</name>
<protein>
    <recommendedName>
        <fullName evidence="1">tRNA-specific 2-thiouridylase MnmA</fullName>
        <ecNumber evidence="1">2.8.1.13</ecNumber>
    </recommendedName>
</protein>
<reference key="1">
    <citation type="journal article" date="2004" name="J. Bacteriol.">
        <title>Comparative genomics of two Leptospira interrogans serovars reveals novel insights into physiology and pathogenesis.</title>
        <authorList>
            <person name="Nascimento A.L.T.O."/>
            <person name="Ko A.I."/>
            <person name="Martins E.A.L."/>
            <person name="Monteiro-Vitorello C.B."/>
            <person name="Ho P.L."/>
            <person name="Haake D.A."/>
            <person name="Verjovski-Almeida S."/>
            <person name="Hartskeerl R.A."/>
            <person name="Marques M.V."/>
            <person name="Oliveira M.C."/>
            <person name="Menck C.F.M."/>
            <person name="Leite L.C.C."/>
            <person name="Carrer H."/>
            <person name="Coutinho L.L."/>
            <person name="Degrave W.M."/>
            <person name="Dellagostin O.A."/>
            <person name="El-Dorry H."/>
            <person name="Ferro E.S."/>
            <person name="Ferro M.I.T."/>
            <person name="Furlan L.R."/>
            <person name="Gamberini M."/>
            <person name="Giglioti E.A."/>
            <person name="Goes-Neto A."/>
            <person name="Goldman G.H."/>
            <person name="Goldman M.H.S."/>
            <person name="Harakava R."/>
            <person name="Jeronimo S.M.B."/>
            <person name="Junqueira-de-Azevedo I.L.M."/>
            <person name="Kimura E.T."/>
            <person name="Kuramae E.E."/>
            <person name="Lemos E.G.M."/>
            <person name="Lemos M.V.F."/>
            <person name="Marino C.L."/>
            <person name="Nunes L.R."/>
            <person name="de Oliveira R.C."/>
            <person name="Pereira G.G."/>
            <person name="Reis M.S."/>
            <person name="Schriefer A."/>
            <person name="Siqueira W.J."/>
            <person name="Sommer P."/>
            <person name="Tsai S.M."/>
            <person name="Simpson A.J.G."/>
            <person name="Ferro J.A."/>
            <person name="Camargo L.E.A."/>
            <person name="Kitajima J.P."/>
            <person name="Setubal J.C."/>
            <person name="Van Sluys M.A."/>
        </authorList>
    </citation>
    <scope>NUCLEOTIDE SEQUENCE [LARGE SCALE GENOMIC DNA]</scope>
    <source>
        <strain>Fiocruz L1-130</strain>
    </source>
</reference>
<dbReference type="EC" id="2.8.1.13" evidence="1"/>
<dbReference type="EMBL" id="AE016823">
    <property type="protein sequence ID" value="AAS70841.1"/>
    <property type="status" value="ALT_INIT"/>
    <property type="molecule type" value="Genomic_DNA"/>
</dbReference>
<dbReference type="RefSeq" id="WP_000033461.1">
    <property type="nucleotide sequence ID" value="NC_005823.1"/>
</dbReference>
<dbReference type="SMR" id="Q72Q44"/>
<dbReference type="GeneID" id="61142155"/>
<dbReference type="KEGG" id="lic:LIC_12269"/>
<dbReference type="HOGENOM" id="CLU_035188_0_0_12"/>
<dbReference type="Proteomes" id="UP000007037">
    <property type="component" value="Chromosome I"/>
</dbReference>
<dbReference type="GO" id="GO:0005737">
    <property type="term" value="C:cytoplasm"/>
    <property type="evidence" value="ECO:0007669"/>
    <property type="project" value="UniProtKB-SubCell"/>
</dbReference>
<dbReference type="GO" id="GO:0005524">
    <property type="term" value="F:ATP binding"/>
    <property type="evidence" value="ECO:0007669"/>
    <property type="project" value="UniProtKB-KW"/>
</dbReference>
<dbReference type="GO" id="GO:0000049">
    <property type="term" value="F:tRNA binding"/>
    <property type="evidence" value="ECO:0007669"/>
    <property type="project" value="UniProtKB-KW"/>
</dbReference>
<dbReference type="GO" id="GO:0103016">
    <property type="term" value="F:tRNA-uridine 2-sulfurtransferase activity"/>
    <property type="evidence" value="ECO:0007669"/>
    <property type="project" value="UniProtKB-EC"/>
</dbReference>
<dbReference type="GO" id="GO:0002143">
    <property type="term" value="P:tRNA wobble position uridine thiolation"/>
    <property type="evidence" value="ECO:0007669"/>
    <property type="project" value="TreeGrafter"/>
</dbReference>
<dbReference type="CDD" id="cd01998">
    <property type="entry name" value="MnmA_TRMU-like"/>
    <property type="match status" value="1"/>
</dbReference>
<dbReference type="FunFam" id="3.40.50.620:FF:000115">
    <property type="entry name" value="tRNA-specific 2-thiouridylase MnmA"/>
    <property type="match status" value="1"/>
</dbReference>
<dbReference type="Gene3D" id="2.30.30.280">
    <property type="entry name" value="Adenine nucleotide alpha hydrolases-like domains"/>
    <property type="match status" value="1"/>
</dbReference>
<dbReference type="Gene3D" id="3.40.50.620">
    <property type="entry name" value="HUPs"/>
    <property type="match status" value="1"/>
</dbReference>
<dbReference type="Gene3D" id="2.40.30.10">
    <property type="entry name" value="Translation factors"/>
    <property type="match status" value="1"/>
</dbReference>
<dbReference type="HAMAP" id="MF_00144">
    <property type="entry name" value="tRNA_thiouridyl_MnmA"/>
    <property type="match status" value="1"/>
</dbReference>
<dbReference type="InterPro" id="IPR004506">
    <property type="entry name" value="MnmA-like"/>
</dbReference>
<dbReference type="InterPro" id="IPR046885">
    <property type="entry name" value="MnmA-like_C"/>
</dbReference>
<dbReference type="InterPro" id="IPR046884">
    <property type="entry name" value="MnmA-like_central"/>
</dbReference>
<dbReference type="InterPro" id="IPR023382">
    <property type="entry name" value="MnmA-like_central_sf"/>
</dbReference>
<dbReference type="InterPro" id="IPR014729">
    <property type="entry name" value="Rossmann-like_a/b/a_fold"/>
</dbReference>
<dbReference type="NCBIfam" id="NF001138">
    <property type="entry name" value="PRK00143.1"/>
    <property type="match status" value="1"/>
</dbReference>
<dbReference type="NCBIfam" id="TIGR00420">
    <property type="entry name" value="trmU"/>
    <property type="match status" value="1"/>
</dbReference>
<dbReference type="PANTHER" id="PTHR11933:SF5">
    <property type="entry name" value="MITOCHONDRIAL TRNA-SPECIFIC 2-THIOURIDYLASE 1"/>
    <property type="match status" value="1"/>
</dbReference>
<dbReference type="PANTHER" id="PTHR11933">
    <property type="entry name" value="TRNA 5-METHYLAMINOMETHYL-2-THIOURIDYLATE -METHYLTRANSFERASE"/>
    <property type="match status" value="1"/>
</dbReference>
<dbReference type="Pfam" id="PF03054">
    <property type="entry name" value="tRNA_Me_trans"/>
    <property type="match status" value="1"/>
</dbReference>
<dbReference type="Pfam" id="PF20258">
    <property type="entry name" value="tRNA_Me_trans_C"/>
    <property type="match status" value="1"/>
</dbReference>
<dbReference type="Pfam" id="PF20259">
    <property type="entry name" value="tRNA_Me_trans_M"/>
    <property type="match status" value="1"/>
</dbReference>
<dbReference type="SUPFAM" id="SSF52402">
    <property type="entry name" value="Adenine nucleotide alpha hydrolases-like"/>
    <property type="match status" value="1"/>
</dbReference>